<evidence type="ECO:0000250" key="1"/>
<evidence type="ECO:0000255" key="2"/>
<evidence type="ECO:0000269" key="3">
    <source>
    </source>
</evidence>
<evidence type="ECO:0000305" key="4"/>
<dbReference type="EC" id="2.1.2.5"/>
<dbReference type="EC" id="6.3.3.2"/>
<dbReference type="EMBL" id="AE004092">
    <property type="protein sequence ID" value="AAK34736.1"/>
    <property type="molecule type" value="Genomic_DNA"/>
</dbReference>
<dbReference type="EMBL" id="CP000017">
    <property type="protein sequence ID" value="AAZ52390.1"/>
    <property type="molecule type" value="Genomic_DNA"/>
</dbReference>
<dbReference type="RefSeq" id="NP_270015.1">
    <property type="nucleotide sequence ID" value="NC_002737.2"/>
</dbReference>
<dbReference type="SMR" id="Q99XR4"/>
<dbReference type="PaxDb" id="1314-HKU360_01885"/>
<dbReference type="KEGG" id="spy:SPy_2083"/>
<dbReference type="KEGG" id="spz:M5005_Spy1772"/>
<dbReference type="PATRIC" id="fig|160490.10.peg.1805"/>
<dbReference type="HOGENOM" id="CLU_040037_0_0_9"/>
<dbReference type="OMA" id="TAPHREN"/>
<dbReference type="UniPathway" id="UPA00193"/>
<dbReference type="UniPathway" id="UPA00379">
    <property type="reaction ID" value="UER00555"/>
</dbReference>
<dbReference type="Proteomes" id="UP000000750">
    <property type="component" value="Chromosome"/>
</dbReference>
<dbReference type="GO" id="GO:0005737">
    <property type="term" value="C:cytoplasm"/>
    <property type="evidence" value="ECO:0007669"/>
    <property type="project" value="UniProtKB-SubCell"/>
</dbReference>
<dbReference type="GO" id="GO:0030272">
    <property type="term" value="F:5-formyltetrahydrofolate cyclo-ligase activity"/>
    <property type="evidence" value="ECO:0007669"/>
    <property type="project" value="UniProtKB-EC"/>
</dbReference>
<dbReference type="GO" id="GO:0005542">
    <property type="term" value="F:folic acid binding"/>
    <property type="evidence" value="ECO:0007669"/>
    <property type="project" value="UniProtKB-KW"/>
</dbReference>
<dbReference type="GO" id="GO:0030409">
    <property type="term" value="F:glutamate formimidoyltransferase activity"/>
    <property type="evidence" value="ECO:0007669"/>
    <property type="project" value="UniProtKB-EC"/>
</dbReference>
<dbReference type="GO" id="GO:0019556">
    <property type="term" value="P:L-histidine catabolic process to glutamate and formamide"/>
    <property type="evidence" value="ECO:0007669"/>
    <property type="project" value="UniProtKB-UniPathway"/>
</dbReference>
<dbReference type="GO" id="GO:0019557">
    <property type="term" value="P:L-histidine catabolic process to glutamate and formate"/>
    <property type="evidence" value="ECO:0007669"/>
    <property type="project" value="UniProtKB-UniPathway"/>
</dbReference>
<dbReference type="GO" id="GO:0035999">
    <property type="term" value="P:tetrahydrofolate interconversion"/>
    <property type="evidence" value="ECO:0007669"/>
    <property type="project" value="UniProtKB-UniPathway"/>
</dbReference>
<dbReference type="Gene3D" id="3.30.70.670">
    <property type="entry name" value="Formiminotransferase, C-terminal subdomain"/>
    <property type="match status" value="1"/>
</dbReference>
<dbReference type="Gene3D" id="3.30.990.10">
    <property type="entry name" value="Formiminotransferase, N-terminal subdomain"/>
    <property type="match status" value="1"/>
</dbReference>
<dbReference type="InterPro" id="IPR013802">
    <property type="entry name" value="Formiminotransferase_C"/>
</dbReference>
<dbReference type="InterPro" id="IPR037070">
    <property type="entry name" value="Formiminotransferase_C_sf"/>
</dbReference>
<dbReference type="InterPro" id="IPR004227">
    <property type="entry name" value="Formiminotransferase_cat"/>
</dbReference>
<dbReference type="InterPro" id="IPR012886">
    <property type="entry name" value="Formiminotransferase_N"/>
</dbReference>
<dbReference type="InterPro" id="IPR037064">
    <property type="entry name" value="Formiminotransferase_N_sf"/>
</dbReference>
<dbReference type="InterPro" id="IPR022384">
    <property type="entry name" value="FormiminoTrfase_cat_dom_sf"/>
</dbReference>
<dbReference type="InterPro" id="IPR051623">
    <property type="entry name" value="FTCD"/>
</dbReference>
<dbReference type="NCBIfam" id="TIGR02024">
    <property type="entry name" value="FtcD"/>
    <property type="match status" value="1"/>
</dbReference>
<dbReference type="PANTHER" id="PTHR12234">
    <property type="entry name" value="FORMIMINOTRANSFERASE-CYCLODEAMINASE"/>
    <property type="match status" value="1"/>
</dbReference>
<dbReference type="PANTHER" id="PTHR12234:SF8">
    <property type="entry name" value="FORMIMINOTRANSFERASE-CYCLODEAMINASE"/>
    <property type="match status" value="1"/>
</dbReference>
<dbReference type="Pfam" id="PF02971">
    <property type="entry name" value="FTCD"/>
    <property type="match status" value="1"/>
</dbReference>
<dbReference type="Pfam" id="PF07837">
    <property type="entry name" value="FTCD_N"/>
    <property type="match status" value="1"/>
</dbReference>
<dbReference type="SMART" id="SM01221">
    <property type="entry name" value="FTCD"/>
    <property type="match status" value="1"/>
</dbReference>
<dbReference type="SMART" id="SM01222">
    <property type="entry name" value="FTCD_N"/>
    <property type="match status" value="1"/>
</dbReference>
<dbReference type="SUPFAM" id="SSF55116">
    <property type="entry name" value="Formiminotransferase domain of formiminotransferase-cyclodeaminase"/>
    <property type="match status" value="2"/>
</dbReference>
<keyword id="KW-0963">Cytoplasm</keyword>
<keyword id="KW-0290">Folate-binding</keyword>
<keyword id="KW-0369">Histidine metabolism</keyword>
<keyword id="KW-0436">Ligase</keyword>
<keyword id="KW-1185">Reference proteome</keyword>
<keyword id="KW-0808">Transferase</keyword>
<proteinExistence type="evidence at protein level"/>
<gene>
    <name type="ordered locus">M5005_Spy1772</name>
    <name type="ordered locus">SPy_2083</name>
</gene>
<reference key="1">
    <citation type="journal article" date="2001" name="Proc. Natl. Acad. Sci. U.S.A.">
        <title>Complete genome sequence of an M1 strain of Streptococcus pyogenes.</title>
        <authorList>
            <person name="Ferretti J.J."/>
            <person name="McShan W.M."/>
            <person name="Ajdic D.J."/>
            <person name="Savic D.J."/>
            <person name="Savic G."/>
            <person name="Lyon K."/>
            <person name="Primeaux C."/>
            <person name="Sezate S."/>
            <person name="Suvorov A.N."/>
            <person name="Kenton S."/>
            <person name="Lai H.S."/>
            <person name="Lin S.P."/>
            <person name="Qian Y."/>
            <person name="Jia H.G."/>
            <person name="Najar F.Z."/>
            <person name="Ren Q."/>
            <person name="Zhu H."/>
            <person name="Song L."/>
            <person name="White J."/>
            <person name="Yuan X."/>
            <person name="Clifton S.W."/>
            <person name="Roe B.A."/>
            <person name="McLaughlin R.E."/>
        </authorList>
    </citation>
    <scope>NUCLEOTIDE SEQUENCE [LARGE SCALE GENOMIC DNA]</scope>
    <source>
        <strain>ATCC 700294 / SF370 / Serotype M1</strain>
    </source>
</reference>
<reference key="2">
    <citation type="journal article" date="2005" name="J. Infect. Dis.">
        <title>Evolutionary origin and emergence of a highly successful clone of serotype M1 group A Streptococcus involved multiple horizontal gene transfer events.</title>
        <authorList>
            <person name="Sumby P."/>
            <person name="Porcella S.F."/>
            <person name="Madrigal A.G."/>
            <person name="Barbian K.D."/>
            <person name="Virtaneva K."/>
            <person name="Ricklefs S.M."/>
            <person name="Sturdevant D.E."/>
            <person name="Graham M.R."/>
            <person name="Vuopio-Varkila J."/>
            <person name="Hoe N.P."/>
            <person name="Musser J.M."/>
        </authorList>
    </citation>
    <scope>NUCLEOTIDE SEQUENCE [LARGE SCALE GENOMIC DNA]</scope>
    <source>
        <strain>ATCC BAA-947 / MGAS5005 / Serotype M1</strain>
    </source>
</reference>
<reference key="3">
    <citation type="journal article" date="2010" name="J. Biol. Chem.">
        <title>Moonlighting glutamate formiminotransferases can functionally replace 5-formyltetrahydrofolate cycloligase.</title>
        <authorList>
            <person name="Jeanguenin L."/>
            <person name="Lara-Nunez A."/>
            <person name="Pribat A."/>
            <person name="Mageroy M.H."/>
            <person name="Gregory J.F. III"/>
            <person name="Rice K.C."/>
            <person name="de Crecy-Lagard V."/>
            <person name="Hanson A.D."/>
        </authorList>
    </citation>
    <scope>FUNCTION</scope>
    <scope>CATALYTIC ACTIVITY</scope>
    <scope>BIOPHYSICOCHEMICAL PROPERTIES</scope>
    <scope>SUBSTRATE SPECIFICITY</scope>
</reference>
<organism>
    <name type="scientific">Streptococcus pyogenes serotype M1</name>
    <dbReference type="NCBI Taxonomy" id="301447"/>
    <lineage>
        <taxon>Bacteria</taxon>
        <taxon>Bacillati</taxon>
        <taxon>Bacillota</taxon>
        <taxon>Bacilli</taxon>
        <taxon>Lactobacillales</taxon>
        <taxon>Streptococcaceae</taxon>
        <taxon>Streptococcus</taxon>
    </lineage>
</organism>
<accession>Q99XR4</accession>
<accession>Q48W85</accession>
<feature type="chain" id="PRO_0000430017" description="Glutamate formimidoyltransferase">
    <location>
        <begin position="1"/>
        <end position="299"/>
    </location>
</feature>
<feature type="active site" description="For formimidoyltransferase activity" evidence="1">
    <location>
        <position position="82"/>
    </location>
</feature>
<feature type="binding site" evidence="2">
    <location>
        <begin position="163"/>
        <end position="172"/>
    </location>
    <ligand>
        <name>folate</name>
        <dbReference type="ChEBI" id="CHEBI:62501"/>
    </ligand>
</feature>
<name>GLFT_STRP1</name>
<protein>
    <recommendedName>
        <fullName>Glutamate formimidoyltransferase</fullName>
        <ecNumber>2.1.2.5</ecNumber>
    </recommendedName>
    <alternativeName>
        <fullName>5-formyltetrahydrofolate cyclo-ligase</fullName>
        <ecNumber>6.3.3.2</ecNumber>
    </alternativeName>
    <alternativeName>
        <fullName>Glutamate formiminotransferase</fullName>
    </alternativeName>
    <alternativeName>
        <fullName>Glutamate formyltransferase</fullName>
    </alternativeName>
</protein>
<comment type="function">
    <text evidence="3">Catalyzes the transfer of the formyl group from N-formylglutamate to tetrahydrofolate (THF) to yield 5-formyltetrahydrofolate (5-CHO-THF) and glutamate (Glu). The triglutamate form of 5-CHO-THF (5-CHO-THF-Glu3) can also be used as substrate. It can also catalyze the transfer of the formimino group from N-formiminoglutamate to tetrahydrofolate (THF) to yield 5-formiminotetrahydrofolate (5-NH=CH-THF) and glutamate (Glu). It can replace YgfA to catalyze the irreversible ATP-dependent transformation of 5-CHO-THF to form 5,10-methenyltetrahydrofolate (5,10-CH=THF).</text>
</comment>
<comment type="catalytic activity">
    <reaction evidence="3">
        <text>(6S)-5-formyl-5,6,7,8-tetrahydrofolate + L-glutamate = N-formyl-L-glutamate + (6S)-5,6,7,8-tetrahydrofolate + H(+)</text>
        <dbReference type="Rhea" id="RHEA:23240"/>
        <dbReference type="ChEBI" id="CHEBI:15378"/>
        <dbReference type="ChEBI" id="CHEBI:17684"/>
        <dbReference type="ChEBI" id="CHEBI:29985"/>
        <dbReference type="ChEBI" id="CHEBI:57453"/>
        <dbReference type="ChEBI" id="CHEBI:57457"/>
        <dbReference type="EC" id="2.1.2.5"/>
    </reaction>
</comment>
<comment type="catalytic activity">
    <reaction evidence="3">
        <text>5-formimidoyltetrahydrofolate + L-glutamate = N-formimidoyl-L-glutamate + (6S)-5,6,7,8-tetrahydrofolate</text>
        <dbReference type="Rhea" id="RHEA:15097"/>
        <dbReference type="ChEBI" id="CHEBI:29985"/>
        <dbReference type="ChEBI" id="CHEBI:57453"/>
        <dbReference type="ChEBI" id="CHEBI:57456"/>
        <dbReference type="ChEBI" id="CHEBI:58928"/>
        <dbReference type="EC" id="2.1.2.5"/>
    </reaction>
</comment>
<comment type="catalytic activity">
    <reaction evidence="3">
        <text>(6S)-5-formyl-5,6,7,8-tetrahydrofolate + ATP = (6R)-5,10-methenyltetrahydrofolate + ADP + phosphate</text>
        <dbReference type="Rhea" id="RHEA:10488"/>
        <dbReference type="ChEBI" id="CHEBI:30616"/>
        <dbReference type="ChEBI" id="CHEBI:43474"/>
        <dbReference type="ChEBI" id="CHEBI:57455"/>
        <dbReference type="ChEBI" id="CHEBI:57457"/>
        <dbReference type="ChEBI" id="CHEBI:456216"/>
        <dbReference type="EC" id="6.3.3.2"/>
    </reaction>
</comment>
<comment type="biophysicochemical properties">
    <kinetics>
        <KM evidence="3">4.8 uM for 5-CHO-THF-Glu3 (at pH 7.3 and 30 degrees Celsius)</KM>
        <KM evidence="3">5.4 uM for 5-CHO-THF (at pH 7.3 and 30 degrees Celsius)</KM>
        <KM evidence="3">1030 uM for Glu (at pH 7.3 and 30 degrees Celsius)</KM>
        <text>kcat is 0.13 sec(-1) for formyltransferase with 5-CHO-THF or 5-CHO-THF-Glu3 as substrates (at pH 7.3 and 30 degrees Celsius).</text>
    </kinetics>
</comment>
<comment type="pathway">
    <text>Amino-acid degradation; L-histidine degradation into L-glutamate; L-glutamate from N-formimidoyl-L-glutamate (transferase route): step 1/1.</text>
</comment>
<comment type="pathway">
    <text>One-carbon metabolism; tetrahydrofolate interconversion.</text>
</comment>
<comment type="subcellular location">
    <subcellularLocation>
        <location evidence="1">Cytoplasm</location>
    </subcellularLocation>
</comment>
<comment type="similarity">
    <text evidence="4">Belongs to the formiminotransferase family.</text>
</comment>
<sequence>MAKIVECIPNFSEGQNQAVIDGLVATAKSIPGVTLLDYSSDASHNRSVFTLVGDDQSIQEAAFQLVKYASENIDMTKHHGEHPRMGATDVCPFVPIKDITTQECVEISKQVAERINRELGIPIFLYEDSATRPERQNLAKVRKGQFEGMPEKLLEEDWAPDYGDRKIHPTAGVTAVGARMPLVAFNVNLDTDNIDIAHKIAKIIRGSGGGYKYCKAIGVMLEDRHIAQVSMNMVNFEKCSLYRTFETIKFEARRYGVNVIGSEVIGLAPAKALIDVAEYYLQVEDFDYHKQILENHLLG</sequence>